<organism>
    <name type="scientific">Natronomonas pharaonis</name>
    <name type="common">Natronobacterium pharaonis</name>
    <dbReference type="NCBI Taxonomy" id="2257"/>
    <lineage>
        <taxon>Archaea</taxon>
        <taxon>Methanobacteriati</taxon>
        <taxon>Methanobacteriota</taxon>
        <taxon>Stenosarchaea group</taxon>
        <taxon>Halobacteria</taxon>
        <taxon>Halobacteriales</taxon>
        <taxon>Haloarculaceae</taxon>
        <taxon>Natronomonas</taxon>
    </lineage>
</organism>
<sequence length="163" mass="17222">MKDISRRRFVLGTGATVAAATLAGCNGNGNGNGNGNGNGEPDTPEGRADQFLTDNDALMYDGDITDETGQDEVVVVTGAGNNGFAFDPAAIRVDVGTTVTWEWTGDGGAHNVVSEPESDFEFESDRVDEEGFTFEQTFDDEGVALYVCTPHRAQGMYGAVIVE</sequence>
<evidence type="ECO:0000250" key="1"/>
<evidence type="ECO:0000256" key="2">
    <source>
        <dbReference type="SAM" id="MobiDB-lite"/>
    </source>
</evidence>
<evidence type="ECO:0000269" key="3">
    <source>
    </source>
</evidence>
<reference key="1">
    <citation type="journal article" date="1994" name="J. Biol. Chem.">
        <title>The primary structure of halocyanin, an archaeal blue copper protein, predicts a lipid anchor for membrane fixation.</title>
        <authorList>
            <person name="Mattar S."/>
            <person name="Scharf B."/>
            <person name="Kent S.B.H."/>
            <person name="Rodewald K."/>
            <person name="Oesterhelt D."/>
            <person name="Engelhard M."/>
        </authorList>
    </citation>
    <scope>NUCLEOTIDE SEQUENCE [GENOMIC DNA]</scope>
    <scope>PARTIAL PROTEIN SEQUENCE</scope>
    <scope>LIPIDATION AT CYS-25</scope>
    <scope>ACETYLATION AT CYS-25</scope>
    <scope>MASS SPECTROMETRY</scope>
    <source>
        <strain>SP-1 / 28</strain>
    </source>
</reference>
<reference key="2">
    <citation type="journal article" date="1993" name="Biochemistry">
        <title>Halocyanin, an archaebacterial blue copper protein (type I) from Natronobacterium pharaonis.</title>
        <authorList>
            <person name="Scharf B."/>
            <person name="Engelhard M."/>
        </authorList>
    </citation>
    <scope>CHARACTERIZATION</scope>
    <scope>PROTEIN SEQUENCE OF 144-163</scope>
</reference>
<feature type="signal peptide">
    <location>
        <begin position="1"/>
        <end position="24"/>
    </location>
</feature>
<feature type="chain" id="PRO_0000002871" description="Halocyanin">
    <location>
        <begin position="25"/>
        <end position="163"/>
    </location>
</feature>
<feature type="domain" description="Plastocyanin-like">
    <location>
        <begin position="48"/>
        <end position="163"/>
    </location>
</feature>
<feature type="region of interest" description="Disordered" evidence="2">
    <location>
        <begin position="26"/>
        <end position="48"/>
    </location>
</feature>
<feature type="compositionally biased region" description="Gly residues" evidence="2">
    <location>
        <begin position="26"/>
        <end position="38"/>
    </location>
</feature>
<feature type="binding site" evidence="1">
    <location>
        <position position="110"/>
    </location>
    <ligand>
        <name>Cu cation</name>
        <dbReference type="ChEBI" id="CHEBI:23378"/>
    </ligand>
</feature>
<feature type="binding site" evidence="1">
    <location>
        <position position="148"/>
    </location>
    <ligand>
        <name>Cu cation</name>
        <dbReference type="ChEBI" id="CHEBI:23378"/>
    </ligand>
</feature>
<feature type="binding site" evidence="1">
    <location>
        <position position="151"/>
    </location>
    <ligand>
        <name>Cu cation</name>
        <dbReference type="ChEBI" id="CHEBI:23378"/>
    </ligand>
</feature>
<feature type="binding site" evidence="1">
    <location>
        <position position="156"/>
    </location>
    <ligand>
        <name>Cu cation</name>
        <dbReference type="ChEBI" id="CHEBI:23378"/>
    </ligand>
</feature>
<feature type="modified residue" description="N-acetylcysteine" evidence="3">
    <location>
        <position position="25"/>
    </location>
</feature>
<feature type="lipid moiety-binding region" description="S-archaeol cysteine" evidence="3">
    <location>
        <position position="25"/>
    </location>
</feature>
<dbReference type="EMBL" id="Z30236">
    <property type="protein sequence ID" value="CAA82942.1"/>
    <property type="molecule type" value="Genomic_DNA"/>
</dbReference>
<dbReference type="PIR" id="A53792">
    <property type="entry name" value="A53792"/>
</dbReference>
<dbReference type="SMR" id="P39442"/>
<dbReference type="iPTMnet" id="P39442"/>
<dbReference type="GO" id="GO:0005886">
    <property type="term" value="C:plasma membrane"/>
    <property type="evidence" value="ECO:0007669"/>
    <property type="project" value="UniProtKB-SubCell"/>
</dbReference>
<dbReference type="GO" id="GO:0005507">
    <property type="term" value="F:copper ion binding"/>
    <property type="evidence" value="ECO:0007669"/>
    <property type="project" value="InterPro"/>
</dbReference>
<dbReference type="GO" id="GO:0009055">
    <property type="term" value="F:electron transfer activity"/>
    <property type="evidence" value="ECO:0007669"/>
    <property type="project" value="InterPro"/>
</dbReference>
<dbReference type="CDD" id="cd04220">
    <property type="entry name" value="Halocyanin"/>
    <property type="match status" value="1"/>
</dbReference>
<dbReference type="Gene3D" id="2.60.40.420">
    <property type="entry name" value="Cupredoxins - blue copper proteins"/>
    <property type="match status" value="1"/>
</dbReference>
<dbReference type="InterPro" id="IPR000923">
    <property type="entry name" value="BlueCu_1"/>
</dbReference>
<dbReference type="InterPro" id="IPR028871">
    <property type="entry name" value="BlueCu_1_BS"/>
</dbReference>
<dbReference type="InterPro" id="IPR008972">
    <property type="entry name" value="Cupredoxin"/>
</dbReference>
<dbReference type="InterPro" id="IPR017533">
    <property type="entry name" value="Halocyanin"/>
</dbReference>
<dbReference type="InterPro" id="IPR006311">
    <property type="entry name" value="TAT_signal"/>
</dbReference>
<dbReference type="NCBIfam" id="TIGR03102">
    <property type="entry name" value="halo_cynanin"/>
    <property type="match status" value="1"/>
</dbReference>
<dbReference type="PANTHER" id="PTHR34192">
    <property type="entry name" value="PLASTOCYANIN MAJOR ISOFORM, CHLOROPLASTIC-RELATED"/>
    <property type="match status" value="1"/>
</dbReference>
<dbReference type="PANTHER" id="PTHR34192:SF10">
    <property type="entry name" value="PLASTOCYANIN MAJOR ISOFORM, CHLOROPLASTIC-RELATED"/>
    <property type="match status" value="1"/>
</dbReference>
<dbReference type="Pfam" id="PF00127">
    <property type="entry name" value="Copper-bind"/>
    <property type="match status" value="1"/>
</dbReference>
<dbReference type="SUPFAM" id="SSF49503">
    <property type="entry name" value="Cupredoxins"/>
    <property type="match status" value="1"/>
</dbReference>
<dbReference type="PROSITE" id="PS00196">
    <property type="entry name" value="COPPER_BLUE"/>
    <property type="match status" value="1"/>
</dbReference>
<gene>
    <name type="primary">hcy</name>
</gene>
<accession>P39442</accession>
<accession>Q9UWL3</accession>
<comment type="function">
    <text>Electron donor. Binds one copper ion.</text>
</comment>
<comment type="biophysicochemical properties">
    <redoxPotential>
        <text>E(0) is +183 mV.</text>
    </redoxPotential>
</comment>
<comment type="subcellular location">
    <subcellularLocation>
        <location>Cell membrane</location>
        <topology>Lipid-anchor</topology>
    </subcellularLocation>
</comment>
<comment type="mass spectrometry" mass="15456.0" error="1.5" method="Electrospray" evidence="3"/>
<protein>
    <recommendedName>
        <fullName>Halocyanin</fullName>
    </recommendedName>
</protein>
<keyword id="KW-0007">Acetylation</keyword>
<keyword id="KW-1003">Cell membrane</keyword>
<keyword id="KW-0186">Copper</keyword>
<keyword id="KW-0903">Direct protein sequencing</keyword>
<keyword id="KW-0249">Electron transport</keyword>
<keyword id="KW-0449">Lipoprotein</keyword>
<keyword id="KW-0472">Membrane</keyword>
<keyword id="KW-0479">Metal-binding</keyword>
<keyword id="KW-0732">Signal</keyword>
<keyword id="KW-0813">Transport</keyword>
<name>HCY_NATPH</name>
<proteinExistence type="evidence at protein level"/>